<comment type="function">
    <text evidence="1">Part of a stress-induced multi-chaperone system, it is involved in the recovery of the cell from heat-induced damage, in cooperation with DnaK, DnaJ and GrpE. Acts before DnaK, in the processing of protein aggregates. Protein binding stimulates the ATPase activity; ATP hydrolysis unfolds the denatured protein aggregates, which probably helps expose new hydrophobic binding sites on the surface of ClpB-bound aggregates, contributing to the solubilization and refolding of denatured protein aggregates by DnaK (By similarity).</text>
</comment>
<comment type="subunit">
    <text evidence="1">Homohexamer. The oligomerization is ATP-dependent (By similarity).</text>
</comment>
<comment type="subcellular location">
    <subcellularLocation>
        <location evidence="3">Cytoplasm</location>
    </subcellularLocation>
</comment>
<comment type="domain">
    <text evidence="1">The Clp repeat (R) domain probably functions as a substrate-discriminating domain, recruiting aggregated proteins to the ClpB hexamer and/or stabilizing bound proteins. The NBD2 domain is responsible for oligomerization, whereas the NBD1 domain stabilizes the hexamer probably in an ATP-dependent manner. The movement of the coiled-coil domain is essential for ClpB ability to rescue proteins from an aggregated state, probably by pulling apart large aggregated proteins, which are bound between the coiled-coils motifs of adjacent ClpB subunits in the functional hexamer (By similarity).</text>
</comment>
<comment type="similarity">
    <text evidence="3">Belongs to the ClpA/ClpB family.</text>
</comment>
<accession>Q7N788</accession>
<organism>
    <name type="scientific">Photorhabdus laumondii subsp. laumondii (strain DSM 15139 / CIP 105565 / TT01)</name>
    <name type="common">Photorhabdus luminescens subsp. laumondii</name>
    <dbReference type="NCBI Taxonomy" id="243265"/>
    <lineage>
        <taxon>Bacteria</taxon>
        <taxon>Pseudomonadati</taxon>
        <taxon>Pseudomonadota</taxon>
        <taxon>Gammaproteobacteria</taxon>
        <taxon>Enterobacterales</taxon>
        <taxon>Morganellaceae</taxon>
        <taxon>Photorhabdus</taxon>
    </lineage>
</organism>
<feature type="chain" id="PRO_0000191153" description="Chaperone protein ClpB">
    <location>
        <begin position="1"/>
        <end position="857"/>
    </location>
</feature>
<feature type="domain" description="Clp R" evidence="2">
    <location>
        <begin position="3"/>
        <end position="146"/>
    </location>
</feature>
<feature type="region of interest" description="Repeat 1" evidence="2">
    <location>
        <begin position="6"/>
        <end position="71"/>
    </location>
</feature>
<feature type="region of interest" description="Repeat 2" evidence="2">
    <location>
        <begin position="83"/>
        <end position="146"/>
    </location>
</feature>
<feature type="region of interest" description="NBD1" evidence="1">
    <location>
        <begin position="159"/>
        <end position="340"/>
    </location>
</feature>
<feature type="region of interest" description="Linker" evidence="1">
    <location>
        <begin position="341"/>
        <end position="545"/>
    </location>
</feature>
<feature type="region of interest" description="NBD2" evidence="1">
    <location>
        <begin position="555"/>
        <end position="765"/>
    </location>
</feature>
<feature type="region of interest" description="C-terminal" evidence="1">
    <location>
        <begin position="766"/>
        <end position="857"/>
    </location>
</feature>
<feature type="coiled-coil region" evidence="1">
    <location>
        <begin position="391"/>
        <end position="523"/>
    </location>
</feature>
<feature type="binding site" evidence="1">
    <location>
        <begin position="206"/>
        <end position="213"/>
    </location>
    <ligand>
        <name>ATP</name>
        <dbReference type="ChEBI" id="CHEBI:30616"/>
        <label>1</label>
    </ligand>
</feature>
<feature type="binding site" evidence="1">
    <location>
        <begin position="605"/>
        <end position="612"/>
    </location>
    <ligand>
        <name>ATP</name>
        <dbReference type="ChEBI" id="CHEBI:30616"/>
        <label>2</label>
    </ligand>
</feature>
<gene>
    <name type="primary">clpB</name>
    <name type="ordered locus">plu1270</name>
</gene>
<dbReference type="EMBL" id="BX571863">
    <property type="protein sequence ID" value="CAE13564.1"/>
    <property type="molecule type" value="Genomic_DNA"/>
</dbReference>
<dbReference type="RefSeq" id="WP_011145594.1">
    <property type="nucleotide sequence ID" value="NC_005126.1"/>
</dbReference>
<dbReference type="SMR" id="Q7N788"/>
<dbReference type="STRING" id="243265.plu1270"/>
<dbReference type="GeneID" id="48847544"/>
<dbReference type="KEGG" id="plu:plu1270"/>
<dbReference type="eggNOG" id="COG0542">
    <property type="taxonomic scope" value="Bacteria"/>
</dbReference>
<dbReference type="HOGENOM" id="CLU_005070_4_0_6"/>
<dbReference type="OrthoDB" id="9803641at2"/>
<dbReference type="Proteomes" id="UP000002514">
    <property type="component" value="Chromosome"/>
</dbReference>
<dbReference type="GO" id="GO:0005737">
    <property type="term" value="C:cytoplasm"/>
    <property type="evidence" value="ECO:0007669"/>
    <property type="project" value="UniProtKB-SubCell"/>
</dbReference>
<dbReference type="GO" id="GO:0005524">
    <property type="term" value="F:ATP binding"/>
    <property type="evidence" value="ECO:0007669"/>
    <property type="project" value="UniProtKB-KW"/>
</dbReference>
<dbReference type="GO" id="GO:0016887">
    <property type="term" value="F:ATP hydrolysis activity"/>
    <property type="evidence" value="ECO:0007669"/>
    <property type="project" value="InterPro"/>
</dbReference>
<dbReference type="GO" id="GO:0034605">
    <property type="term" value="P:cellular response to heat"/>
    <property type="evidence" value="ECO:0007669"/>
    <property type="project" value="TreeGrafter"/>
</dbReference>
<dbReference type="GO" id="GO:0042026">
    <property type="term" value="P:protein refolding"/>
    <property type="evidence" value="ECO:0007669"/>
    <property type="project" value="InterPro"/>
</dbReference>
<dbReference type="CDD" id="cd00009">
    <property type="entry name" value="AAA"/>
    <property type="match status" value="1"/>
</dbReference>
<dbReference type="CDD" id="cd19499">
    <property type="entry name" value="RecA-like_ClpB_Hsp104-like"/>
    <property type="match status" value="1"/>
</dbReference>
<dbReference type="FunFam" id="1.10.1780.10:FF:000003">
    <property type="entry name" value="ATP-dependent chaperone ClpB"/>
    <property type="match status" value="1"/>
</dbReference>
<dbReference type="FunFam" id="1.10.8.60:FF:000017">
    <property type="entry name" value="ATP-dependent chaperone ClpB"/>
    <property type="match status" value="1"/>
</dbReference>
<dbReference type="FunFam" id="3.40.50.300:FF:000120">
    <property type="entry name" value="ATP-dependent chaperone ClpB"/>
    <property type="match status" value="1"/>
</dbReference>
<dbReference type="FunFam" id="3.40.50.300:FF:000025">
    <property type="entry name" value="ATP-dependent Clp protease subunit"/>
    <property type="match status" value="1"/>
</dbReference>
<dbReference type="FunFam" id="3.40.50.300:FF:000010">
    <property type="entry name" value="Chaperone clpB 1, putative"/>
    <property type="match status" value="1"/>
</dbReference>
<dbReference type="Gene3D" id="1.10.8.60">
    <property type="match status" value="1"/>
</dbReference>
<dbReference type="Gene3D" id="1.10.1780.10">
    <property type="entry name" value="Clp, N-terminal domain"/>
    <property type="match status" value="1"/>
</dbReference>
<dbReference type="Gene3D" id="3.40.50.300">
    <property type="entry name" value="P-loop containing nucleotide triphosphate hydrolases"/>
    <property type="match status" value="3"/>
</dbReference>
<dbReference type="InterPro" id="IPR003593">
    <property type="entry name" value="AAA+_ATPase"/>
</dbReference>
<dbReference type="InterPro" id="IPR003959">
    <property type="entry name" value="ATPase_AAA_core"/>
</dbReference>
<dbReference type="InterPro" id="IPR017730">
    <property type="entry name" value="Chaperonin_ClpB"/>
</dbReference>
<dbReference type="InterPro" id="IPR019489">
    <property type="entry name" value="Clp_ATPase_C"/>
</dbReference>
<dbReference type="InterPro" id="IPR036628">
    <property type="entry name" value="Clp_N_dom_sf"/>
</dbReference>
<dbReference type="InterPro" id="IPR004176">
    <property type="entry name" value="Clp_R_dom"/>
</dbReference>
<dbReference type="InterPro" id="IPR001270">
    <property type="entry name" value="ClpA/B"/>
</dbReference>
<dbReference type="InterPro" id="IPR018368">
    <property type="entry name" value="ClpA/B_CS1"/>
</dbReference>
<dbReference type="InterPro" id="IPR028299">
    <property type="entry name" value="ClpA/B_CS2"/>
</dbReference>
<dbReference type="InterPro" id="IPR041546">
    <property type="entry name" value="ClpA/ClpB_AAA_lid"/>
</dbReference>
<dbReference type="InterPro" id="IPR050130">
    <property type="entry name" value="ClpA_ClpB"/>
</dbReference>
<dbReference type="InterPro" id="IPR027417">
    <property type="entry name" value="P-loop_NTPase"/>
</dbReference>
<dbReference type="NCBIfam" id="TIGR03346">
    <property type="entry name" value="chaperone_ClpB"/>
    <property type="match status" value="1"/>
</dbReference>
<dbReference type="NCBIfam" id="NF008118">
    <property type="entry name" value="PRK10865.1"/>
    <property type="match status" value="1"/>
</dbReference>
<dbReference type="PANTHER" id="PTHR11638">
    <property type="entry name" value="ATP-DEPENDENT CLP PROTEASE"/>
    <property type="match status" value="1"/>
</dbReference>
<dbReference type="PANTHER" id="PTHR11638:SF18">
    <property type="entry name" value="HEAT SHOCK PROTEIN 104"/>
    <property type="match status" value="1"/>
</dbReference>
<dbReference type="Pfam" id="PF00004">
    <property type="entry name" value="AAA"/>
    <property type="match status" value="1"/>
</dbReference>
<dbReference type="Pfam" id="PF07724">
    <property type="entry name" value="AAA_2"/>
    <property type="match status" value="1"/>
</dbReference>
<dbReference type="Pfam" id="PF17871">
    <property type="entry name" value="AAA_lid_9"/>
    <property type="match status" value="1"/>
</dbReference>
<dbReference type="Pfam" id="PF02861">
    <property type="entry name" value="Clp_N"/>
    <property type="match status" value="2"/>
</dbReference>
<dbReference type="Pfam" id="PF10431">
    <property type="entry name" value="ClpB_D2-small"/>
    <property type="match status" value="1"/>
</dbReference>
<dbReference type="PRINTS" id="PR00300">
    <property type="entry name" value="CLPPROTEASEA"/>
</dbReference>
<dbReference type="SMART" id="SM00382">
    <property type="entry name" value="AAA"/>
    <property type="match status" value="2"/>
</dbReference>
<dbReference type="SMART" id="SM01086">
    <property type="entry name" value="ClpB_D2-small"/>
    <property type="match status" value="1"/>
</dbReference>
<dbReference type="SUPFAM" id="SSF81923">
    <property type="entry name" value="Double Clp-N motif"/>
    <property type="match status" value="1"/>
</dbReference>
<dbReference type="SUPFAM" id="SSF52540">
    <property type="entry name" value="P-loop containing nucleoside triphosphate hydrolases"/>
    <property type="match status" value="2"/>
</dbReference>
<dbReference type="PROSITE" id="PS51903">
    <property type="entry name" value="CLP_R"/>
    <property type="match status" value="1"/>
</dbReference>
<dbReference type="PROSITE" id="PS00870">
    <property type="entry name" value="CLPAB_1"/>
    <property type="match status" value="1"/>
</dbReference>
<dbReference type="PROSITE" id="PS00871">
    <property type="entry name" value="CLPAB_2"/>
    <property type="match status" value="1"/>
</dbReference>
<reference key="1">
    <citation type="journal article" date="2003" name="Nat. Biotechnol.">
        <title>The genome sequence of the entomopathogenic bacterium Photorhabdus luminescens.</title>
        <authorList>
            <person name="Duchaud E."/>
            <person name="Rusniok C."/>
            <person name="Frangeul L."/>
            <person name="Buchrieser C."/>
            <person name="Givaudan A."/>
            <person name="Taourit S."/>
            <person name="Bocs S."/>
            <person name="Boursaux-Eude C."/>
            <person name="Chandler M."/>
            <person name="Charles J.-F."/>
            <person name="Dassa E."/>
            <person name="Derose R."/>
            <person name="Derzelle S."/>
            <person name="Freyssinet G."/>
            <person name="Gaudriault S."/>
            <person name="Medigue C."/>
            <person name="Lanois A."/>
            <person name="Powell K."/>
            <person name="Siguier P."/>
            <person name="Vincent R."/>
            <person name="Wingate V."/>
            <person name="Zouine M."/>
            <person name="Glaser P."/>
            <person name="Boemare N."/>
            <person name="Danchin A."/>
            <person name="Kunst F."/>
        </authorList>
    </citation>
    <scope>NUCLEOTIDE SEQUENCE [LARGE SCALE GENOMIC DNA]</scope>
    <source>
        <strain>DSM 15139 / CIP 105565 / TT01</strain>
    </source>
</reference>
<name>CLPB_PHOLL</name>
<proteinExistence type="inferred from homology"/>
<protein>
    <recommendedName>
        <fullName>Chaperone protein ClpB</fullName>
    </recommendedName>
</protein>
<evidence type="ECO:0000250" key="1"/>
<evidence type="ECO:0000255" key="2">
    <source>
        <dbReference type="PROSITE-ProRule" id="PRU01251"/>
    </source>
</evidence>
<evidence type="ECO:0000305" key="3"/>
<keyword id="KW-0067">ATP-binding</keyword>
<keyword id="KW-0143">Chaperone</keyword>
<keyword id="KW-0175">Coiled coil</keyword>
<keyword id="KW-0963">Cytoplasm</keyword>
<keyword id="KW-0547">Nucleotide-binding</keyword>
<keyword id="KW-1185">Reference proteome</keyword>
<keyword id="KW-0677">Repeat</keyword>
<keyword id="KW-0346">Stress response</keyword>
<sequence length="857" mass="95663">MRLDRLTNKFQLALADAQSFALGHDNQFIEPIHLMSSLLKQEGGSIRPLLTSIGIDAGRFSNQLELALERLPRVQGIGGDVQPSNDLVRHLNLCDKLAQKAGDNFISSELFVLAALEERGTLSDILKAVGATKEKITKAIEQMRGGEKVDDQGAEDQRQALKKYTIDLTERAEQGKLDPVIGRDEEIRRTIQVLQRRTKNNPVLIGEPGVGKTAIVEGLAQRIINGEVPEGLKNKRVLSLDMGALLAGAKYRGEFEERLKGVLNDLAKQEGNVILFIDELHTMVGAGKADGAMDAGNMLKPALARGELHCVGATTLDEYRQYIEKDAALERRFQKVYVAEPSVEDTIAILRGLKERYELHHHVQITDPAIVAAATLSHRYISDRMLPDKAIDLIDEAGASLRMQMDSKPEALDRLERRVIQLKLEQQALKKESDDASKKRLEMLNEELLVKEREYSELEEEWKAEKAALTGTQHIKAELENARISLEQARRSGDLAKMSEIQYGKIPGLEKQLAAATQAESKHMKLLRNKVTDAEIADILARWTGIPVARMLESEKDKLLRMEQELHKRVIGQDEAVNAISNAIRRSRAGLADPNRPIGSFLFLGPTGVGKTELCKALANFLFDSDDAMVRIDMSEFMEKHAVSRLVGAPPGYVGYEEGGYLTEAVRRRPYSVILLDEVEKAHSDVFNILLQVLDDGRLTDGQGRTVDFRNTVVIMTSNLGSDMIQERFGSLNYDEMKDIVMGIVSHNFRPEFINRIDEAVVFHPLGRRHLSAIADIQLQRLYKRLEERGYQVTITQQALEILAEAGFDPVYGARPLKRAIQQEIENPLAQKILSGQLLPGKPVTLDVENSHIVAKQ</sequence>